<keyword id="KW-0963">Cytoplasm</keyword>
<keyword id="KW-0275">Fatty acid biosynthesis</keyword>
<keyword id="KW-0276">Fatty acid metabolism</keyword>
<keyword id="KW-0444">Lipid biosynthesis</keyword>
<keyword id="KW-0443">Lipid metabolism</keyword>
<keyword id="KW-0596">Phosphopantetheine</keyword>
<keyword id="KW-0597">Phosphoprotein</keyword>
<keyword id="KW-1185">Reference proteome</keyword>
<gene>
    <name evidence="1" type="primary">acpP</name>
    <name type="ordered locus">OB1525</name>
</gene>
<name>ACP_OCEIH</name>
<protein>
    <recommendedName>
        <fullName evidence="1">Acyl carrier protein</fullName>
        <shortName evidence="1">ACP</shortName>
    </recommendedName>
</protein>
<organism>
    <name type="scientific">Oceanobacillus iheyensis (strain DSM 14371 / CIP 107618 / JCM 11309 / KCTC 3954 / HTE831)</name>
    <dbReference type="NCBI Taxonomy" id="221109"/>
    <lineage>
        <taxon>Bacteria</taxon>
        <taxon>Bacillati</taxon>
        <taxon>Bacillota</taxon>
        <taxon>Bacilli</taxon>
        <taxon>Bacillales</taxon>
        <taxon>Bacillaceae</taxon>
        <taxon>Oceanobacillus</taxon>
    </lineage>
</organism>
<accession>Q8ER06</accession>
<reference key="1">
    <citation type="journal article" date="2002" name="Nucleic Acids Res.">
        <title>Genome sequence of Oceanobacillus iheyensis isolated from the Iheya Ridge and its unexpected adaptive capabilities to extreme environments.</title>
        <authorList>
            <person name="Takami H."/>
            <person name="Takaki Y."/>
            <person name="Uchiyama I."/>
        </authorList>
    </citation>
    <scope>NUCLEOTIDE SEQUENCE [LARGE SCALE GENOMIC DNA]</scope>
    <source>
        <strain>DSM 14371 / CIP 107618 / JCM 11309 / KCTC 3954 / HTE831</strain>
    </source>
</reference>
<comment type="function">
    <text evidence="1">Carrier of the growing fatty acid chain in fatty acid biosynthesis.</text>
</comment>
<comment type="pathway">
    <text evidence="1">Lipid metabolism; fatty acid biosynthesis.</text>
</comment>
<comment type="subcellular location">
    <subcellularLocation>
        <location evidence="1">Cytoplasm</location>
    </subcellularLocation>
</comment>
<comment type="PTM">
    <text evidence="1">4'-phosphopantetheine is transferred from CoA to a specific serine of apo-ACP by AcpS. This modification is essential for activity because fatty acids are bound in thioester linkage to the sulfhydryl of the prosthetic group.</text>
</comment>
<comment type="similarity">
    <text evidence="1">Belongs to the acyl carrier protein (ACP) family.</text>
</comment>
<feature type="chain" id="PRO_0000180158" description="Acyl carrier protein">
    <location>
        <begin position="1"/>
        <end position="77"/>
    </location>
</feature>
<feature type="domain" description="Carrier" evidence="2">
    <location>
        <begin position="2"/>
        <end position="77"/>
    </location>
</feature>
<feature type="modified residue" description="O-(pantetheine 4'-phosphoryl)serine" evidence="2">
    <location>
        <position position="37"/>
    </location>
</feature>
<dbReference type="EMBL" id="BA000028">
    <property type="protein sequence ID" value="BAC13481.1"/>
    <property type="molecule type" value="Genomic_DNA"/>
</dbReference>
<dbReference type="RefSeq" id="WP_011065925.1">
    <property type="nucleotide sequence ID" value="NC_004193.1"/>
</dbReference>
<dbReference type="SMR" id="Q8ER06"/>
<dbReference type="STRING" id="221109.gene:10733765"/>
<dbReference type="KEGG" id="oih:OB1525"/>
<dbReference type="eggNOG" id="COG0236">
    <property type="taxonomic scope" value="Bacteria"/>
</dbReference>
<dbReference type="HOGENOM" id="CLU_108696_5_3_9"/>
<dbReference type="OrthoDB" id="9804551at2"/>
<dbReference type="PhylomeDB" id="Q8ER06"/>
<dbReference type="UniPathway" id="UPA00094"/>
<dbReference type="Proteomes" id="UP000000822">
    <property type="component" value="Chromosome"/>
</dbReference>
<dbReference type="GO" id="GO:0005829">
    <property type="term" value="C:cytosol"/>
    <property type="evidence" value="ECO:0007669"/>
    <property type="project" value="TreeGrafter"/>
</dbReference>
<dbReference type="GO" id="GO:0016020">
    <property type="term" value="C:membrane"/>
    <property type="evidence" value="ECO:0007669"/>
    <property type="project" value="GOC"/>
</dbReference>
<dbReference type="GO" id="GO:0000035">
    <property type="term" value="F:acyl binding"/>
    <property type="evidence" value="ECO:0007669"/>
    <property type="project" value="TreeGrafter"/>
</dbReference>
<dbReference type="GO" id="GO:0000036">
    <property type="term" value="F:acyl carrier activity"/>
    <property type="evidence" value="ECO:0007669"/>
    <property type="project" value="UniProtKB-UniRule"/>
</dbReference>
<dbReference type="GO" id="GO:0009245">
    <property type="term" value="P:lipid A biosynthetic process"/>
    <property type="evidence" value="ECO:0007669"/>
    <property type="project" value="TreeGrafter"/>
</dbReference>
<dbReference type="FunFam" id="1.10.1200.10:FF:000001">
    <property type="entry name" value="Acyl carrier protein"/>
    <property type="match status" value="1"/>
</dbReference>
<dbReference type="Gene3D" id="1.10.1200.10">
    <property type="entry name" value="ACP-like"/>
    <property type="match status" value="1"/>
</dbReference>
<dbReference type="HAMAP" id="MF_01217">
    <property type="entry name" value="Acyl_carrier"/>
    <property type="match status" value="1"/>
</dbReference>
<dbReference type="InterPro" id="IPR003231">
    <property type="entry name" value="ACP"/>
</dbReference>
<dbReference type="InterPro" id="IPR036736">
    <property type="entry name" value="ACP-like_sf"/>
</dbReference>
<dbReference type="InterPro" id="IPR009081">
    <property type="entry name" value="PP-bd_ACP"/>
</dbReference>
<dbReference type="NCBIfam" id="TIGR00517">
    <property type="entry name" value="acyl_carrier"/>
    <property type="match status" value="1"/>
</dbReference>
<dbReference type="NCBIfam" id="NF002148">
    <property type="entry name" value="PRK00982.1-2"/>
    <property type="match status" value="1"/>
</dbReference>
<dbReference type="NCBIfam" id="NF002150">
    <property type="entry name" value="PRK00982.1-4"/>
    <property type="match status" value="1"/>
</dbReference>
<dbReference type="NCBIfam" id="NF002151">
    <property type="entry name" value="PRK00982.1-5"/>
    <property type="match status" value="1"/>
</dbReference>
<dbReference type="PANTHER" id="PTHR20863">
    <property type="entry name" value="ACYL CARRIER PROTEIN"/>
    <property type="match status" value="1"/>
</dbReference>
<dbReference type="PANTHER" id="PTHR20863:SF76">
    <property type="entry name" value="CARRIER DOMAIN-CONTAINING PROTEIN"/>
    <property type="match status" value="1"/>
</dbReference>
<dbReference type="Pfam" id="PF00550">
    <property type="entry name" value="PP-binding"/>
    <property type="match status" value="1"/>
</dbReference>
<dbReference type="SUPFAM" id="SSF47336">
    <property type="entry name" value="ACP-like"/>
    <property type="match status" value="1"/>
</dbReference>
<dbReference type="PROSITE" id="PS50075">
    <property type="entry name" value="CARRIER"/>
    <property type="match status" value="1"/>
</dbReference>
<evidence type="ECO:0000255" key="1">
    <source>
        <dbReference type="HAMAP-Rule" id="MF_01217"/>
    </source>
</evidence>
<evidence type="ECO:0000255" key="2">
    <source>
        <dbReference type="PROSITE-ProRule" id="PRU00258"/>
    </source>
</evidence>
<proteinExistence type="inferred from homology"/>
<sequence length="77" mass="8732">MAEVFDRVKEIIIDRLDVEESKVTMEASFKDDLDADSLDVVELVMELEDEFDMEIADEDAEKINTVGDAVDYINSKA</sequence>